<feature type="chain" id="PRO_0000390447" description="Ubiquitin-conjugating enzyme E2 S">
    <location>
        <begin position="1"/>
        <end position="208"/>
    </location>
</feature>
<feature type="domain" description="UBC core" evidence="1">
    <location>
        <begin position="14"/>
        <end position="160"/>
    </location>
</feature>
<feature type="region of interest" description="Disordered" evidence="3">
    <location>
        <begin position="159"/>
        <end position="208"/>
    </location>
</feature>
<feature type="compositionally biased region" description="Basic and acidic residues" evidence="3">
    <location>
        <begin position="170"/>
        <end position="198"/>
    </location>
</feature>
<feature type="compositionally biased region" description="Basic residues" evidence="3">
    <location>
        <begin position="199"/>
        <end position="208"/>
    </location>
</feature>
<feature type="active site" description="Glycyl thioester intermediate" evidence="1 2">
    <location>
        <position position="98"/>
    </location>
</feature>
<organism>
    <name type="scientific">Drosophila willistoni</name>
    <name type="common">Fruit fly</name>
    <dbReference type="NCBI Taxonomy" id="7260"/>
    <lineage>
        <taxon>Eukaryota</taxon>
        <taxon>Metazoa</taxon>
        <taxon>Ecdysozoa</taxon>
        <taxon>Arthropoda</taxon>
        <taxon>Hexapoda</taxon>
        <taxon>Insecta</taxon>
        <taxon>Pterygota</taxon>
        <taxon>Neoptera</taxon>
        <taxon>Endopterygota</taxon>
        <taxon>Diptera</taxon>
        <taxon>Brachycera</taxon>
        <taxon>Muscomorpha</taxon>
        <taxon>Ephydroidea</taxon>
        <taxon>Drosophilidae</taxon>
        <taxon>Drosophila</taxon>
        <taxon>Sophophora</taxon>
    </lineage>
</organism>
<proteinExistence type="inferred from homology"/>
<protein>
    <recommendedName>
        <fullName>Ubiquitin-conjugating enzyme E2 S</fullName>
        <ecNumber>2.3.2.23</ecNumber>
    </recommendedName>
    <alternativeName>
        <fullName>E2 ubiquitin-conjugating enzyme S</fullName>
    </alternativeName>
    <alternativeName>
        <fullName>Ubiquitin carrier protein S</fullName>
    </alternativeName>
    <alternativeName>
        <fullName>Ubiquitin-protein ligase S</fullName>
    </alternativeName>
</protein>
<keyword id="KW-0067">ATP-binding</keyword>
<keyword id="KW-0131">Cell cycle</keyword>
<keyword id="KW-0132">Cell division</keyword>
<keyword id="KW-0547">Nucleotide-binding</keyword>
<keyword id="KW-1185">Reference proteome</keyword>
<keyword id="KW-0808">Transferase</keyword>
<keyword id="KW-0833">Ubl conjugation pathway</keyword>
<gene>
    <name type="ORF">GK16201</name>
</gene>
<sequence>MSSQYSNVENLSPQTIRQVMRELQEMENTPPEGIKVLINESDVTDIQALIDGPAGTPYAIGVFRVKLTLSKDFPQTPPKAYFLTKIFHPNVAANGEICVNTLKKDWKPDLGIKHILLTIKCLLIVPNPESALNEEAGKMLLERYDDYSQRARMMTEIHAQPAKCASTTSDAKDDDGPSTKKHAGLDKKLQDKKKEKLLKEKKRMLKRL</sequence>
<accession>B4N208</accession>
<name>UBE2S_DROWI</name>
<dbReference type="EC" id="2.3.2.23"/>
<dbReference type="EMBL" id="CH963925">
    <property type="protein sequence ID" value="EDW78397.1"/>
    <property type="molecule type" value="Genomic_DNA"/>
</dbReference>
<dbReference type="SMR" id="B4N208"/>
<dbReference type="STRING" id="7260.B4N208"/>
<dbReference type="EnsemblMetazoa" id="FBtr0246852">
    <property type="protein sequence ID" value="FBpp0245344"/>
    <property type="gene ID" value="FBgn0218203"/>
</dbReference>
<dbReference type="EnsemblMetazoa" id="XM_002067375.4">
    <property type="protein sequence ID" value="XP_002067411.1"/>
    <property type="gene ID" value="LOC6644491"/>
</dbReference>
<dbReference type="GeneID" id="6644491"/>
<dbReference type="KEGG" id="dwi:6644491"/>
<dbReference type="eggNOG" id="KOG0423">
    <property type="taxonomic scope" value="Eukaryota"/>
</dbReference>
<dbReference type="HOGENOM" id="CLU_030988_5_3_1"/>
<dbReference type="OMA" id="QPAKCGA"/>
<dbReference type="OrthoDB" id="10069349at2759"/>
<dbReference type="PhylomeDB" id="B4N208"/>
<dbReference type="UniPathway" id="UPA00143"/>
<dbReference type="Proteomes" id="UP000007798">
    <property type="component" value="Unassembled WGS sequence"/>
</dbReference>
<dbReference type="GO" id="GO:0005524">
    <property type="term" value="F:ATP binding"/>
    <property type="evidence" value="ECO:0007669"/>
    <property type="project" value="UniProtKB-KW"/>
</dbReference>
<dbReference type="GO" id="GO:0061631">
    <property type="term" value="F:ubiquitin conjugating enzyme activity"/>
    <property type="evidence" value="ECO:0007669"/>
    <property type="project" value="UniProtKB-EC"/>
</dbReference>
<dbReference type="GO" id="GO:0031145">
    <property type="term" value="P:anaphase-promoting complex-dependent catabolic process"/>
    <property type="evidence" value="ECO:0000250"/>
    <property type="project" value="UniProtKB"/>
</dbReference>
<dbReference type="GO" id="GO:0051301">
    <property type="term" value="P:cell division"/>
    <property type="evidence" value="ECO:0007669"/>
    <property type="project" value="UniProtKB-KW"/>
</dbReference>
<dbReference type="GO" id="GO:0010458">
    <property type="term" value="P:exit from mitosis"/>
    <property type="evidence" value="ECO:0000250"/>
    <property type="project" value="UniProtKB"/>
</dbReference>
<dbReference type="GO" id="GO:0016567">
    <property type="term" value="P:protein ubiquitination"/>
    <property type="evidence" value="ECO:0007669"/>
    <property type="project" value="UniProtKB-UniPathway"/>
</dbReference>
<dbReference type="CDD" id="cd23804">
    <property type="entry name" value="UBCc_UBE2S"/>
    <property type="match status" value="1"/>
</dbReference>
<dbReference type="FunFam" id="3.10.110.10:FF:000034">
    <property type="entry name" value="Ubiquitin-conjugating enzyme E2 S"/>
    <property type="match status" value="1"/>
</dbReference>
<dbReference type="Gene3D" id="3.10.110.10">
    <property type="entry name" value="Ubiquitin Conjugating Enzyme"/>
    <property type="match status" value="1"/>
</dbReference>
<dbReference type="InterPro" id="IPR050113">
    <property type="entry name" value="Ub_conjugating_enzyme"/>
</dbReference>
<dbReference type="InterPro" id="IPR000608">
    <property type="entry name" value="UBQ-conjugat_E2_core"/>
</dbReference>
<dbReference type="InterPro" id="IPR023313">
    <property type="entry name" value="UBQ-conjugating_AS"/>
</dbReference>
<dbReference type="InterPro" id="IPR016135">
    <property type="entry name" value="UBQ-conjugating_enzyme/RWD"/>
</dbReference>
<dbReference type="PANTHER" id="PTHR24067">
    <property type="entry name" value="UBIQUITIN-CONJUGATING ENZYME E2"/>
    <property type="match status" value="1"/>
</dbReference>
<dbReference type="Pfam" id="PF00179">
    <property type="entry name" value="UQ_con"/>
    <property type="match status" value="1"/>
</dbReference>
<dbReference type="SMART" id="SM00212">
    <property type="entry name" value="UBCc"/>
    <property type="match status" value="1"/>
</dbReference>
<dbReference type="SUPFAM" id="SSF54495">
    <property type="entry name" value="UBC-like"/>
    <property type="match status" value="1"/>
</dbReference>
<dbReference type="PROSITE" id="PS00183">
    <property type="entry name" value="UBC_1"/>
    <property type="match status" value="1"/>
</dbReference>
<dbReference type="PROSITE" id="PS50127">
    <property type="entry name" value="UBC_2"/>
    <property type="match status" value="1"/>
</dbReference>
<evidence type="ECO:0000255" key="1">
    <source>
        <dbReference type="PROSITE-ProRule" id="PRU00388"/>
    </source>
</evidence>
<evidence type="ECO:0000255" key="2">
    <source>
        <dbReference type="PROSITE-ProRule" id="PRU10133"/>
    </source>
</evidence>
<evidence type="ECO:0000256" key="3">
    <source>
        <dbReference type="SAM" id="MobiDB-lite"/>
    </source>
</evidence>
<reference key="1">
    <citation type="journal article" date="2007" name="Nature">
        <title>Evolution of genes and genomes on the Drosophila phylogeny.</title>
        <authorList>
            <consortium name="Drosophila 12 genomes consortium"/>
        </authorList>
    </citation>
    <scope>NUCLEOTIDE SEQUENCE [LARGE SCALE GENOMIC DNA]</scope>
    <source>
        <strain>Tucson 14030-0811.24</strain>
    </source>
</reference>
<comment type="function">
    <text evidence="1">Catalyzes the covalent attachment of ubiquitin to other proteins. Acts as an essential factor of the anaphase promoting complex/cyclosome (APC/C), a cell cycle-regulated ubiquitin ligase that controls progression through mitosis. Acts by specifically elongating polyubiquitin chains initiated by the E2 enzyme vih/UbcH10 on APC/C substrates, enhancing the degradation of APC/C substrates by the proteasome and promoting mitotic exit.</text>
</comment>
<comment type="catalytic activity">
    <reaction evidence="1 2">
        <text>S-ubiquitinyl-[E1 ubiquitin-activating enzyme]-L-cysteine + [E2 ubiquitin-conjugating enzyme]-L-cysteine = [E1 ubiquitin-activating enzyme]-L-cysteine + S-ubiquitinyl-[E2 ubiquitin-conjugating enzyme]-L-cysteine.</text>
        <dbReference type="EC" id="2.3.2.23"/>
    </reaction>
</comment>
<comment type="pathway">
    <text evidence="1">Protein modification; protein ubiquitination.</text>
</comment>
<comment type="similarity">
    <text evidence="1">Belongs to the ubiquitin-conjugating enzyme family.</text>
</comment>